<sequence length="520" mass="56851">MSRQLTLYPGAERLGFSGCSAVISGRFSGSHASVRAGVKGAAFGSRSLFCVGGGRRLALSSGGRSGGFTLGHGGASGGRPGGFVGTVFGSAGLGPTCPSVCPPGGIPQVVVNKSLLAPLNVELDPEIQKVRAQEREQIKALNNKFASFIDKVRFLEQQNQVLETKWELLQQLDQNNSRRSLEPVHESYISNLQKQLEILSGDRVRLDSELRNMREVVEDCKKRYEVEINRRTAAENEFVVLKKDVDAAYMNKVELQAKVDSMTDDIKFFKVLFEGEIAQMQSHISDTSVILSMDNNRQLDLDSILAEVRAQYEEIAVKSKAETENMYQCKIQELQATAGQHGDDLKLTKSEITEINRLIQRIHSEIGNMKKQCSNLETAIADAEQRGDCALKDARAKLDQLEGVLQQSKEELARMLREHQELMNVKLALDMEIATYRKLLESEESRMAGEYPSSVSISVVSSTNAGPGGAGFSVGFGASSNYNYRPLALEVKTKGSCGSELKDPPAKTSASSCVSKKASR</sequence>
<keyword id="KW-0175">Coiled coil</keyword>
<keyword id="KW-0403">Intermediate filament</keyword>
<keyword id="KW-0416">Keratin</keyword>
<keyword id="KW-1185">Reference proteome</keyword>
<proteinExistence type="inferred from homology"/>
<protein>
    <recommendedName>
        <fullName>Keratin, type II cytoskeletal 72</fullName>
    </recommendedName>
    <alternativeName>
        <fullName>Cytokeratin-72</fullName>
        <shortName>CK-72</shortName>
    </alternativeName>
    <alternativeName>
        <fullName>Keratin-72</fullName>
        <shortName>K72</shortName>
    </alternativeName>
    <alternativeName>
        <fullName>Type II inner root sheath-specific keratin-K6irs2</fullName>
    </alternativeName>
    <alternativeName>
        <fullName>Type-II keratin Kb35</fullName>
    </alternativeName>
</protein>
<name>K2C72_RAT</name>
<comment type="function">
    <text evidence="1">Has a role in hair formation. Specific component of keratin intermediate filaments in the inner root sheath (IRS) of the hair follicle (By similarity).</text>
</comment>
<comment type="subunit">
    <text>Heterotetramer of two type I and two type II keratins.</text>
</comment>
<comment type="miscellaneous">
    <text>There are two types of cytoskeletal and microfibrillar keratin, I (acidic) and II (neutral to basic) (40-55 and 56-70 kDa, respectively).</text>
</comment>
<comment type="similarity">
    <text evidence="2">Belongs to the intermediate filament family.</text>
</comment>
<comment type="sequence caution" evidence="4">
    <conflict type="erroneous gene model prediction">
        <sequence resource="EMBL-CDS" id="DAA02226"/>
    </conflict>
</comment>
<gene>
    <name type="primary">Krt72</name>
    <name type="synonym">Kb35</name>
</gene>
<accession>Q6IG04</accession>
<feature type="chain" id="PRO_0000314879" description="Keratin, type II cytoskeletal 72">
    <location>
        <begin position="1"/>
        <end position="520"/>
    </location>
</feature>
<feature type="domain" description="IF rod" evidence="2">
    <location>
        <begin position="134"/>
        <end position="447"/>
    </location>
</feature>
<feature type="region of interest" description="Head">
    <location>
        <begin position="1"/>
        <end position="133"/>
    </location>
</feature>
<feature type="region of interest" description="Coil 1A">
    <location>
        <begin position="134"/>
        <end position="169"/>
    </location>
</feature>
<feature type="region of interest" description="Linker 1">
    <location>
        <begin position="170"/>
        <end position="188"/>
    </location>
</feature>
<feature type="region of interest" description="Coil 1B">
    <location>
        <begin position="189"/>
        <end position="280"/>
    </location>
</feature>
<feature type="region of interest" description="Linker 12">
    <location>
        <begin position="281"/>
        <end position="304"/>
    </location>
</feature>
<feature type="region of interest" description="Coil 2">
    <location>
        <begin position="305"/>
        <end position="443"/>
    </location>
</feature>
<feature type="region of interest" description="Tail">
    <location>
        <begin position="444"/>
        <end position="520"/>
    </location>
</feature>
<feature type="region of interest" description="Disordered" evidence="3">
    <location>
        <begin position="495"/>
        <end position="520"/>
    </location>
</feature>
<feature type="site" description="Stutter">
    <location>
        <position position="385"/>
    </location>
</feature>
<organism>
    <name type="scientific">Rattus norvegicus</name>
    <name type="common">Rat</name>
    <dbReference type="NCBI Taxonomy" id="10116"/>
    <lineage>
        <taxon>Eukaryota</taxon>
        <taxon>Metazoa</taxon>
        <taxon>Chordata</taxon>
        <taxon>Craniata</taxon>
        <taxon>Vertebrata</taxon>
        <taxon>Euteleostomi</taxon>
        <taxon>Mammalia</taxon>
        <taxon>Eutheria</taxon>
        <taxon>Euarchontoglires</taxon>
        <taxon>Glires</taxon>
        <taxon>Rodentia</taxon>
        <taxon>Myomorpha</taxon>
        <taxon>Muroidea</taxon>
        <taxon>Muridae</taxon>
        <taxon>Murinae</taxon>
        <taxon>Rattus</taxon>
    </lineage>
</organism>
<reference key="1">
    <citation type="journal article" date="2004" name="Nature">
        <title>Genome sequence of the Brown Norway rat yields insights into mammalian evolution.</title>
        <authorList>
            <person name="Gibbs R.A."/>
            <person name="Weinstock G.M."/>
            <person name="Metzker M.L."/>
            <person name="Muzny D.M."/>
            <person name="Sodergren E.J."/>
            <person name="Scherer S."/>
            <person name="Scott G."/>
            <person name="Steffen D."/>
            <person name="Worley K.C."/>
            <person name="Burch P.E."/>
            <person name="Okwuonu G."/>
            <person name="Hines S."/>
            <person name="Lewis L."/>
            <person name="Deramo C."/>
            <person name="Delgado O."/>
            <person name="Dugan-Rocha S."/>
            <person name="Miner G."/>
            <person name="Morgan M."/>
            <person name="Hawes A."/>
            <person name="Gill R."/>
            <person name="Holt R.A."/>
            <person name="Adams M.D."/>
            <person name="Amanatides P.G."/>
            <person name="Baden-Tillson H."/>
            <person name="Barnstead M."/>
            <person name="Chin S."/>
            <person name="Evans C.A."/>
            <person name="Ferriera S."/>
            <person name="Fosler C."/>
            <person name="Glodek A."/>
            <person name="Gu Z."/>
            <person name="Jennings D."/>
            <person name="Kraft C.L."/>
            <person name="Nguyen T."/>
            <person name="Pfannkoch C.M."/>
            <person name="Sitter C."/>
            <person name="Sutton G.G."/>
            <person name="Venter J.C."/>
            <person name="Woodage T."/>
            <person name="Smith D."/>
            <person name="Lee H.-M."/>
            <person name="Gustafson E."/>
            <person name="Cahill P."/>
            <person name="Kana A."/>
            <person name="Doucette-Stamm L."/>
            <person name="Weinstock K."/>
            <person name="Fechtel K."/>
            <person name="Weiss R.B."/>
            <person name="Dunn D.M."/>
            <person name="Green E.D."/>
            <person name="Blakesley R.W."/>
            <person name="Bouffard G.G."/>
            <person name="De Jong P.J."/>
            <person name="Osoegawa K."/>
            <person name="Zhu B."/>
            <person name="Marra M."/>
            <person name="Schein J."/>
            <person name="Bosdet I."/>
            <person name="Fjell C."/>
            <person name="Jones S."/>
            <person name="Krzywinski M."/>
            <person name="Mathewson C."/>
            <person name="Siddiqui A."/>
            <person name="Wye N."/>
            <person name="McPherson J."/>
            <person name="Zhao S."/>
            <person name="Fraser C.M."/>
            <person name="Shetty J."/>
            <person name="Shatsman S."/>
            <person name="Geer K."/>
            <person name="Chen Y."/>
            <person name="Abramzon S."/>
            <person name="Nierman W.C."/>
            <person name="Havlak P.H."/>
            <person name="Chen R."/>
            <person name="Durbin K.J."/>
            <person name="Egan A."/>
            <person name="Ren Y."/>
            <person name="Song X.-Z."/>
            <person name="Li B."/>
            <person name="Liu Y."/>
            <person name="Qin X."/>
            <person name="Cawley S."/>
            <person name="Cooney A.J."/>
            <person name="D'Souza L.M."/>
            <person name="Martin K."/>
            <person name="Wu J.Q."/>
            <person name="Gonzalez-Garay M.L."/>
            <person name="Jackson A.R."/>
            <person name="Kalafus K.J."/>
            <person name="McLeod M.P."/>
            <person name="Milosavljevic A."/>
            <person name="Virk D."/>
            <person name="Volkov A."/>
            <person name="Wheeler D.A."/>
            <person name="Zhang Z."/>
            <person name="Bailey J.A."/>
            <person name="Eichler E.E."/>
            <person name="Tuzun E."/>
            <person name="Birney E."/>
            <person name="Mongin E."/>
            <person name="Ureta-Vidal A."/>
            <person name="Woodwark C."/>
            <person name="Zdobnov E."/>
            <person name="Bork P."/>
            <person name="Suyama M."/>
            <person name="Torrents D."/>
            <person name="Alexandersson M."/>
            <person name="Trask B.J."/>
            <person name="Young J.M."/>
            <person name="Huang H."/>
            <person name="Wang H."/>
            <person name="Xing H."/>
            <person name="Daniels S."/>
            <person name="Gietzen D."/>
            <person name="Schmidt J."/>
            <person name="Stevens K."/>
            <person name="Vitt U."/>
            <person name="Wingrove J."/>
            <person name="Camara F."/>
            <person name="Mar Alba M."/>
            <person name="Abril J.F."/>
            <person name="Guigo R."/>
            <person name="Smit A."/>
            <person name="Dubchak I."/>
            <person name="Rubin E.M."/>
            <person name="Couronne O."/>
            <person name="Poliakov A."/>
            <person name="Huebner N."/>
            <person name="Ganten D."/>
            <person name="Goesele C."/>
            <person name="Hummel O."/>
            <person name="Kreitler T."/>
            <person name="Lee Y.-A."/>
            <person name="Monti J."/>
            <person name="Schulz H."/>
            <person name="Zimdahl H."/>
            <person name="Himmelbauer H."/>
            <person name="Lehrach H."/>
            <person name="Jacob H.J."/>
            <person name="Bromberg S."/>
            <person name="Gullings-Handley J."/>
            <person name="Jensen-Seaman M.I."/>
            <person name="Kwitek A.E."/>
            <person name="Lazar J."/>
            <person name="Pasko D."/>
            <person name="Tonellato P.J."/>
            <person name="Twigger S."/>
            <person name="Ponting C.P."/>
            <person name="Duarte J.M."/>
            <person name="Rice S."/>
            <person name="Goodstadt L."/>
            <person name="Beatson S.A."/>
            <person name="Emes R.D."/>
            <person name="Winter E.E."/>
            <person name="Webber C."/>
            <person name="Brandt P."/>
            <person name="Nyakatura G."/>
            <person name="Adetobi M."/>
            <person name="Chiaromonte F."/>
            <person name="Elnitski L."/>
            <person name="Eswara P."/>
            <person name="Hardison R.C."/>
            <person name="Hou M."/>
            <person name="Kolbe D."/>
            <person name="Makova K."/>
            <person name="Miller W."/>
            <person name="Nekrutenko A."/>
            <person name="Riemer C."/>
            <person name="Schwartz S."/>
            <person name="Taylor J."/>
            <person name="Yang S."/>
            <person name="Zhang Y."/>
            <person name="Lindpaintner K."/>
            <person name="Andrews T.D."/>
            <person name="Caccamo M."/>
            <person name="Clamp M."/>
            <person name="Clarke L."/>
            <person name="Curwen V."/>
            <person name="Durbin R.M."/>
            <person name="Eyras E."/>
            <person name="Searle S.M."/>
            <person name="Cooper G.M."/>
            <person name="Batzoglou S."/>
            <person name="Brudno M."/>
            <person name="Sidow A."/>
            <person name="Stone E.A."/>
            <person name="Payseur B.A."/>
            <person name="Bourque G."/>
            <person name="Lopez-Otin C."/>
            <person name="Puente X.S."/>
            <person name="Chakrabarti K."/>
            <person name="Chatterji S."/>
            <person name="Dewey C."/>
            <person name="Pachter L."/>
            <person name="Bray N."/>
            <person name="Yap V.B."/>
            <person name="Caspi A."/>
            <person name="Tesler G."/>
            <person name="Pevzner P.A."/>
            <person name="Haussler D."/>
            <person name="Roskin K.M."/>
            <person name="Baertsch R."/>
            <person name="Clawson H."/>
            <person name="Furey T.S."/>
            <person name="Hinrichs A.S."/>
            <person name="Karolchik D."/>
            <person name="Kent W.J."/>
            <person name="Rosenbloom K.R."/>
            <person name="Trumbower H."/>
            <person name="Weirauch M."/>
            <person name="Cooper D.N."/>
            <person name="Stenson P.D."/>
            <person name="Ma B."/>
            <person name="Brent M."/>
            <person name="Arumugam M."/>
            <person name="Shteynberg D."/>
            <person name="Copley R.R."/>
            <person name="Taylor M.S."/>
            <person name="Riethman H."/>
            <person name="Mudunuri U."/>
            <person name="Peterson J."/>
            <person name="Guyer M."/>
            <person name="Felsenfeld A."/>
            <person name="Old S."/>
            <person name="Mockrin S."/>
            <person name="Collins F.S."/>
        </authorList>
    </citation>
    <scope>NUCLEOTIDE SEQUENCE [LARGE SCALE GENOMIC DNA]</scope>
    <source>
        <strain>Brown Norway</strain>
    </source>
</reference>
<reference key="2">
    <citation type="journal article" date="2004" name="Eur. J. Cell Biol.">
        <title>Comprehensive analysis of keratin gene clusters in humans and rodents.</title>
        <authorList>
            <person name="Hesse M."/>
            <person name="Zimek A."/>
            <person name="Weber K."/>
            <person name="Magin T.M."/>
        </authorList>
    </citation>
    <scope>IDENTIFICATION</scope>
</reference>
<evidence type="ECO:0000250" key="1"/>
<evidence type="ECO:0000255" key="2">
    <source>
        <dbReference type="PROSITE-ProRule" id="PRU01188"/>
    </source>
</evidence>
<evidence type="ECO:0000256" key="3">
    <source>
        <dbReference type="SAM" id="MobiDB-lite"/>
    </source>
</evidence>
<evidence type="ECO:0000305" key="4"/>
<dbReference type="EMBL" id="AABR03055962">
    <property type="status" value="NOT_ANNOTATED_CDS"/>
    <property type="molecule type" value="Genomic_DNA"/>
</dbReference>
<dbReference type="EMBL" id="BK003981">
    <property type="protein sequence ID" value="DAA02226.1"/>
    <property type="status" value="ALT_SEQ"/>
    <property type="molecule type" value="mRNA"/>
</dbReference>
<dbReference type="RefSeq" id="NP_001008809.2">
    <property type="nucleotide sequence ID" value="NM_001008809.2"/>
</dbReference>
<dbReference type="RefSeq" id="XP_017450521.1">
    <property type="nucleotide sequence ID" value="XM_017595032.1"/>
</dbReference>
<dbReference type="SMR" id="Q6IG04"/>
<dbReference type="FunCoup" id="Q6IG04">
    <property type="interactions" value="25"/>
</dbReference>
<dbReference type="STRING" id="10116.ENSRNOP00000074275"/>
<dbReference type="GlyGen" id="Q6IG04">
    <property type="glycosylation" value="1 site"/>
</dbReference>
<dbReference type="iPTMnet" id="Q6IG04"/>
<dbReference type="PhosphoSitePlus" id="Q6IG04"/>
<dbReference type="PaxDb" id="10116-ENSRNOP00000035371"/>
<dbReference type="Ensembl" id="ENSRNOT00000038105.4">
    <property type="protein sequence ID" value="ENSRNOP00000035371.2"/>
    <property type="gene ID" value="ENSRNOG00000030876.3"/>
</dbReference>
<dbReference type="GeneID" id="406227"/>
<dbReference type="KEGG" id="rno:406227"/>
<dbReference type="UCSC" id="RGD:1303216">
    <property type="organism name" value="rat"/>
</dbReference>
<dbReference type="AGR" id="RGD:1303216"/>
<dbReference type="CTD" id="140807"/>
<dbReference type="RGD" id="1303216">
    <property type="gene designation" value="Krt72"/>
</dbReference>
<dbReference type="eggNOG" id="ENOG502T3SC">
    <property type="taxonomic scope" value="Eukaryota"/>
</dbReference>
<dbReference type="GeneTree" id="ENSGT00940000162105"/>
<dbReference type="HOGENOM" id="CLU_012560_6_1_1"/>
<dbReference type="InParanoid" id="Q6IG04"/>
<dbReference type="OMA" id="CKKRYEV"/>
<dbReference type="PhylomeDB" id="Q6IG04"/>
<dbReference type="TreeFam" id="TF317854"/>
<dbReference type="Reactome" id="R-RNO-6805567">
    <property type="pathway name" value="Keratinization"/>
</dbReference>
<dbReference type="Reactome" id="R-RNO-6809371">
    <property type="pathway name" value="Formation of the cornified envelope"/>
</dbReference>
<dbReference type="PRO" id="PR:Q6IG04"/>
<dbReference type="Proteomes" id="UP000002494">
    <property type="component" value="Chromosome 7"/>
</dbReference>
<dbReference type="Bgee" id="ENSRNOG00000030876">
    <property type="expression patterns" value="Expressed in heart and 1 other cell type or tissue"/>
</dbReference>
<dbReference type="ExpressionAtlas" id="Q6IG04">
    <property type="expression patterns" value="baseline and differential"/>
</dbReference>
<dbReference type="GO" id="GO:0045095">
    <property type="term" value="C:keratin filament"/>
    <property type="evidence" value="ECO:0000318"/>
    <property type="project" value="GO_Central"/>
</dbReference>
<dbReference type="GO" id="GO:0030280">
    <property type="term" value="F:structural constituent of skin epidermis"/>
    <property type="evidence" value="ECO:0000318"/>
    <property type="project" value="GO_Central"/>
</dbReference>
<dbReference type="GO" id="GO:0045109">
    <property type="term" value="P:intermediate filament organization"/>
    <property type="evidence" value="ECO:0000318"/>
    <property type="project" value="GO_Central"/>
</dbReference>
<dbReference type="GO" id="GO:0031424">
    <property type="term" value="P:keratinization"/>
    <property type="evidence" value="ECO:0000318"/>
    <property type="project" value="GO_Central"/>
</dbReference>
<dbReference type="FunFam" id="1.20.5.1160:FF:000001">
    <property type="entry name" value="Keratin type II"/>
    <property type="match status" value="1"/>
</dbReference>
<dbReference type="FunFam" id="1.20.5.170:FF:000004">
    <property type="entry name" value="Keratin, type II cytoskeletal 5"/>
    <property type="match status" value="1"/>
</dbReference>
<dbReference type="FunFam" id="1.20.5.500:FF:000001">
    <property type="entry name" value="Type II keratin 23"/>
    <property type="match status" value="1"/>
</dbReference>
<dbReference type="Gene3D" id="1.20.5.170">
    <property type="match status" value="1"/>
</dbReference>
<dbReference type="Gene3D" id="1.20.5.500">
    <property type="entry name" value="Single helix bin"/>
    <property type="match status" value="1"/>
</dbReference>
<dbReference type="Gene3D" id="1.20.5.1160">
    <property type="entry name" value="Vasodilator-stimulated phosphoprotein"/>
    <property type="match status" value="1"/>
</dbReference>
<dbReference type="InterPro" id="IPR018039">
    <property type="entry name" value="IF_conserved"/>
</dbReference>
<dbReference type="InterPro" id="IPR039008">
    <property type="entry name" value="IF_rod_dom"/>
</dbReference>
<dbReference type="InterPro" id="IPR032444">
    <property type="entry name" value="Keratin_2_head"/>
</dbReference>
<dbReference type="InterPro" id="IPR003054">
    <property type="entry name" value="Keratin_II"/>
</dbReference>
<dbReference type="PANTHER" id="PTHR45616">
    <property type="entry name" value="GATA-TYPE DOMAIN-CONTAINING PROTEIN"/>
    <property type="match status" value="1"/>
</dbReference>
<dbReference type="PANTHER" id="PTHR45616:SF2">
    <property type="entry name" value="KERATIN, TYPE II CYTOSKELETAL 72"/>
    <property type="match status" value="1"/>
</dbReference>
<dbReference type="Pfam" id="PF00038">
    <property type="entry name" value="Filament"/>
    <property type="match status" value="1"/>
</dbReference>
<dbReference type="Pfam" id="PF16208">
    <property type="entry name" value="Keratin_2_head"/>
    <property type="match status" value="1"/>
</dbReference>
<dbReference type="PRINTS" id="PR01276">
    <property type="entry name" value="TYPE2KERATIN"/>
</dbReference>
<dbReference type="SMART" id="SM01391">
    <property type="entry name" value="Filament"/>
    <property type="match status" value="1"/>
</dbReference>
<dbReference type="SUPFAM" id="SSF64593">
    <property type="entry name" value="Intermediate filament protein, coiled coil region"/>
    <property type="match status" value="3"/>
</dbReference>
<dbReference type="PROSITE" id="PS00226">
    <property type="entry name" value="IF_ROD_1"/>
    <property type="match status" value="1"/>
</dbReference>
<dbReference type="PROSITE" id="PS51842">
    <property type="entry name" value="IF_ROD_2"/>
    <property type="match status" value="1"/>
</dbReference>